<keyword id="KW-0963">Cytoplasm</keyword>
<keyword id="KW-0671">Queuosine biosynthesis</keyword>
<keyword id="KW-0949">S-adenosyl-L-methionine</keyword>
<keyword id="KW-0808">Transferase</keyword>
<accession>Q4UMM7</accession>
<proteinExistence type="inferred from homology"/>
<sequence>MKLSDFDFDLPTELIAQYPASERDNSDLLIATTPPIKTKFYNIIDYLKEGDLLVFNNSKVIKAKLNLERNITINLNQKLSDDSWSAFAKPARKLNIGDEFYSDNHKVIITEKFAMGEIKVKFELDNISVFEFLDKYGEMPLPVYIRRSKRHGEEEESSDEAISSQNPEIATESKRTPSNDDKLDSLRYQTIYSQIEGSVAAPTAGLHFTKEILDKLKAKGVQIAFVTLHVGAGTFLPVKTENIHEHKIHTEYCSITPETAEIINKAKQERRRIIAVGTTTLRTLESSCNNGVVKAGSFETDIFITPGFKFQTTDMLLTNFHFPKSTLFMLICAFAGFKEMHELYKYAIKEKMRFFSYGDATVLYRKV</sequence>
<protein>
    <recommendedName>
        <fullName evidence="1">S-adenosylmethionine:tRNA ribosyltransferase-isomerase</fullName>
        <ecNumber evidence="1">2.4.99.17</ecNumber>
    </recommendedName>
    <alternativeName>
        <fullName evidence="1">Queuosine biosynthesis protein QueA</fullName>
    </alternativeName>
</protein>
<evidence type="ECO:0000255" key="1">
    <source>
        <dbReference type="HAMAP-Rule" id="MF_00113"/>
    </source>
</evidence>
<evidence type="ECO:0000256" key="2">
    <source>
        <dbReference type="SAM" id="MobiDB-lite"/>
    </source>
</evidence>
<feature type="chain" id="PRO_0000231367" description="S-adenosylmethionine:tRNA ribosyltransferase-isomerase">
    <location>
        <begin position="1"/>
        <end position="367"/>
    </location>
</feature>
<feature type="region of interest" description="Disordered" evidence="2">
    <location>
        <begin position="150"/>
        <end position="182"/>
    </location>
</feature>
<feature type="compositionally biased region" description="Basic and acidic residues" evidence="2">
    <location>
        <begin position="171"/>
        <end position="182"/>
    </location>
</feature>
<dbReference type="EC" id="2.4.99.17" evidence="1"/>
<dbReference type="EMBL" id="CP000053">
    <property type="protein sequence ID" value="AAY61181.1"/>
    <property type="molecule type" value="Genomic_DNA"/>
</dbReference>
<dbReference type="SMR" id="Q4UMM7"/>
<dbReference type="STRING" id="315456.RF_0330"/>
<dbReference type="KEGG" id="rfe:RF_0330"/>
<dbReference type="eggNOG" id="COG0809">
    <property type="taxonomic scope" value="Bacteria"/>
</dbReference>
<dbReference type="HOGENOM" id="CLU_039110_1_0_5"/>
<dbReference type="OrthoDB" id="9805933at2"/>
<dbReference type="UniPathway" id="UPA00392"/>
<dbReference type="Proteomes" id="UP000008548">
    <property type="component" value="Chromosome"/>
</dbReference>
<dbReference type="GO" id="GO:0005737">
    <property type="term" value="C:cytoplasm"/>
    <property type="evidence" value="ECO:0007669"/>
    <property type="project" value="UniProtKB-SubCell"/>
</dbReference>
<dbReference type="GO" id="GO:0051075">
    <property type="term" value="F:S-adenosylmethionine:tRNA ribosyltransferase-isomerase activity"/>
    <property type="evidence" value="ECO:0007669"/>
    <property type="project" value="UniProtKB-EC"/>
</dbReference>
<dbReference type="GO" id="GO:0008616">
    <property type="term" value="P:queuosine biosynthetic process"/>
    <property type="evidence" value="ECO:0007669"/>
    <property type="project" value="UniProtKB-UniRule"/>
</dbReference>
<dbReference type="GO" id="GO:0002099">
    <property type="term" value="P:tRNA wobble guanine modification"/>
    <property type="evidence" value="ECO:0007669"/>
    <property type="project" value="TreeGrafter"/>
</dbReference>
<dbReference type="FunFam" id="3.40.1780.10:FF:000001">
    <property type="entry name" value="S-adenosylmethionine:tRNA ribosyltransferase-isomerase"/>
    <property type="match status" value="1"/>
</dbReference>
<dbReference type="Gene3D" id="2.40.10.240">
    <property type="entry name" value="QueA-like"/>
    <property type="match status" value="1"/>
</dbReference>
<dbReference type="Gene3D" id="3.40.1780.10">
    <property type="entry name" value="QueA-like"/>
    <property type="match status" value="1"/>
</dbReference>
<dbReference type="HAMAP" id="MF_00113">
    <property type="entry name" value="QueA"/>
    <property type="match status" value="1"/>
</dbReference>
<dbReference type="InterPro" id="IPR003699">
    <property type="entry name" value="QueA"/>
</dbReference>
<dbReference type="InterPro" id="IPR042118">
    <property type="entry name" value="QueA_dom1"/>
</dbReference>
<dbReference type="InterPro" id="IPR042119">
    <property type="entry name" value="QueA_dom2"/>
</dbReference>
<dbReference type="InterPro" id="IPR036100">
    <property type="entry name" value="QueA_sf"/>
</dbReference>
<dbReference type="NCBIfam" id="NF002398">
    <property type="entry name" value="PRK01424.1"/>
    <property type="match status" value="1"/>
</dbReference>
<dbReference type="PANTHER" id="PTHR30307">
    <property type="entry name" value="S-ADENOSYLMETHIONINE:TRNA RIBOSYLTRANSFERASE-ISOMERASE"/>
    <property type="match status" value="1"/>
</dbReference>
<dbReference type="PANTHER" id="PTHR30307:SF0">
    <property type="entry name" value="S-ADENOSYLMETHIONINE:TRNA RIBOSYLTRANSFERASE-ISOMERASE"/>
    <property type="match status" value="1"/>
</dbReference>
<dbReference type="Pfam" id="PF02547">
    <property type="entry name" value="Queuosine_synth"/>
    <property type="match status" value="1"/>
</dbReference>
<dbReference type="SUPFAM" id="SSF111337">
    <property type="entry name" value="QueA-like"/>
    <property type="match status" value="1"/>
</dbReference>
<organism>
    <name type="scientific">Rickettsia felis (strain ATCC VR-1525 / URRWXCal2)</name>
    <name type="common">Rickettsia azadi</name>
    <dbReference type="NCBI Taxonomy" id="315456"/>
    <lineage>
        <taxon>Bacteria</taxon>
        <taxon>Pseudomonadati</taxon>
        <taxon>Pseudomonadota</taxon>
        <taxon>Alphaproteobacteria</taxon>
        <taxon>Rickettsiales</taxon>
        <taxon>Rickettsiaceae</taxon>
        <taxon>Rickettsieae</taxon>
        <taxon>Rickettsia</taxon>
        <taxon>spotted fever group</taxon>
    </lineage>
</organism>
<reference key="1">
    <citation type="journal article" date="2005" name="PLoS Biol.">
        <title>The genome sequence of Rickettsia felis identifies the first putative conjugative plasmid in an obligate intracellular parasite.</title>
        <authorList>
            <person name="Ogata H."/>
            <person name="Renesto P."/>
            <person name="Audic S."/>
            <person name="Robert C."/>
            <person name="Blanc G."/>
            <person name="Fournier P.-E."/>
            <person name="Parinello H."/>
            <person name="Claverie J.-M."/>
            <person name="Raoult D."/>
        </authorList>
    </citation>
    <scope>NUCLEOTIDE SEQUENCE [LARGE SCALE GENOMIC DNA]</scope>
    <source>
        <strain>ATCC VR-1525 / URRWXCal2</strain>
    </source>
</reference>
<gene>
    <name evidence="1" type="primary">queA</name>
    <name type="ordered locus">RF_0330</name>
</gene>
<name>QUEA_RICFE</name>
<comment type="function">
    <text evidence="1">Transfers and isomerizes the ribose moiety from AdoMet to the 7-aminomethyl group of 7-deazaguanine (preQ1-tRNA) to give epoxyqueuosine (oQ-tRNA).</text>
</comment>
<comment type="catalytic activity">
    <reaction evidence="1">
        <text>7-aminomethyl-7-carbaguanosine(34) in tRNA + S-adenosyl-L-methionine = epoxyqueuosine(34) in tRNA + adenine + L-methionine + 2 H(+)</text>
        <dbReference type="Rhea" id="RHEA:32155"/>
        <dbReference type="Rhea" id="RHEA-COMP:10342"/>
        <dbReference type="Rhea" id="RHEA-COMP:18582"/>
        <dbReference type="ChEBI" id="CHEBI:15378"/>
        <dbReference type="ChEBI" id="CHEBI:16708"/>
        <dbReference type="ChEBI" id="CHEBI:57844"/>
        <dbReference type="ChEBI" id="CHEBI:59789"/>
        <dbReference type="ChEBI" id="CHEBI:82833"/>
        <dbReference type="ChEBI" id="CHEBI:194443"/>
        <dbReference type="EC" id="2.4.99.17"/>
    </reaction>
</comment>
<comment type="pathway">
    <text evidence="1">tRNA modification; tRNA-queuosine biosynthesis.</text>
</comment>
<comment type="subunit">
    <text evidence="1">Monomer.</text>
</comment>
<comment type="subcellular location">
    <subcellularLocation>
        <location evidence="1">Cytoplasm</location>
    </subcellularLocation>
</comment>
<comment type="similarity">
    <text evidence="1">Belongs to the QueA family.</text>
</comment>